<proteinExistence type="inferred from homology"/>
<keyword id="KW-0489">Methyltransferase</keyword>
<keyword id="KW-1185">Reference proteome</keyword>
<keyword id="KW-0949">S-adenosyl-L-methionine</keyword>
<keyword id="KW-0808">Transferase</keyword>
<dbReference type="EC" id="2.1.1.-" evidence="5"/>
<dbReference type="EMBL" id="AM270096">
    <property type="protein sequence ID" value="CAK47958.1"/>
    <property type="molecule type" value="Genomic_DNA"/>
</dbReference>
<dbReference type="SMR" id="A2QK64"/>
<dbReference type="EnsemblFungi" id="CAK47958">
    <property type="protein sequence ID" value="CAK47958"/>
    <property type="gene ID" value="An04g09510"/>
</dbReference>
<dbReference type="VEuPathDB" id="FungiDB:An04g09510"/>
<dbReference type="HOGENOM" id="CLU_065416_0_0_1"/>
<dbReference type="Proteomes" id="UP000006706">
    <property type="component" value="Chromosome 6L"/>
</dbReference>
<dbReference type="GO" id="GO:0008168">
    <property type="term" value="F:methyltransferase activity"/>
    <property type="evidence" value="ECO:0007669"/>
    <property type="project" value="UniProtKB-KW"/>
</dbReference>
<dbReference type="GO" id="GO:0032259">
    <property type="term" value="P:methylation"/>
    <property type="evidence" value="ECO:0007669"/>
    <property type="project" value="UniProtKB-KW"/>
</dbReference>
<dbReference type="CDD" id="cd02440">
    <property type="entry name" value="AdoMet_MTases"/>
    <property type="match status" value="1"/>
</dbReference>
<dbReference type="Gene3D" id="3.40.50.150">
    <property type="entry name" value="Vaccinia Virus protein VP39"/>
    <property type="match status" value="1"/>
</dbReference>
<dbReference type="InterPro" id="IPR025714">
    <property type="entry name" value="Methyltranfer_dom"/>
</dbReference>
<dbReference type="InterPro" id="IPR029063">
    <property type="entry name" value="SAM-dependent_MTases_sf"/>
</dbReference>
<dbReference type="PANTHER" id="PTHR43591:SF24">
    <property type="entry name" value="2-METHOXY-6-POLYPRENYL-1,4-BENZOQUINOL METHYLASE, MITOCHONDRIAL"/>
    <property type="match status" value="1"/>
</dbReference>
<dbReference type="PANTHER" id="PTHR43591">
    <property type="entry name" value="METHYLTRANSFERASE"/>
    <property type="match status" value="1"/>
</dbReference>
<dbReference type="Pfam" id="PF13847">
    <property type="entry name" value="Methyltransf_31"/>
    <property type="match status" value="1"/>
</dbReference>
<dbReference type="SUPFAM" id="SSF53335">
    <property type="entry name" value="S-adenosyl-L-methionine-dependent methyltransferases"/>
    <property type="match status" value="1"/>
</dbReference>
<evidence type="ECO:0000269" key="1">
    <source>
    </source>
</evidence>
<evidence type="ECO:0000269" key="2">
    <source>
    </source>
</evidence>
<evidence type="ECO:0000269" key="3">
    <source>
    </source>
</evidence>
<evidence type="ECO:0000303" key="4">
    <source>
    </source>
</evidence>
<evidence type="ECO:0000305" key="5"/>
<name>KTNA_ASPNC</name>
<protein>
    <recommendedName>
        <fullName evidence="5">Methyltransferase ktnA</fullName>
        <ecNumber evidence="5">2.1.1.-</ecNumber>
    </recommendedName>
    <alternativeName>
        <fullName evidence="4">Kotanin biosynthesis cluster protein A</fullName>
    </alternativeName>
</protein>
<comment type="function">
    <text evidence="1 2 3">Non-reducing polyketide synthase; part of the gene cluster that mediates the biosynthesis of the bicoumarin kotanin (PubMed:22945023, PubMed:26389790). The non-reducing polyketide synthase ktnS first catalyzes the formation of the pentaketidic 4,7-dihydroxy-5-methylcoumarin from acetyl coenzyme A and 4 malonyl coenzyme A molecules (PubMed:17315249, PubMed:22945023). Further O-methylation by ktnB leads to the formation of 7-demethylsiderin (PubMed:17315249, PubMed:22945023, PubMed:26389790). Then, an oxidative phenol coupling catalyzed by the cytochrome P450 monooxygenase ktnC forms the 8,8'-dimer P-orlandin via dimerization the monomeric precursor, 7-demethylsiderin (PubMed:26389790). P-orlandin is subsequently O-methylated in a stepwise fashion to demethylkotanin and kotanin (PubMed:22945023). The function of ktnA within the pathway has not been determined yet (PubMed:22945023).</text>
</comment>
<comment type="cofactor">
    <cofactor evidence="5">
        <name>S-adenosyl-L-methionine</name>
        <dbReference type="ChEBI" id="CHEBI:59789"/>
    </cofactor>
</comment>
<comment type="similarity">
    <text evidence="5">Belongs to the class I-like SAM-binding methyltransferase superfamily.</text>
</comment>
<reference key="1">
    <citation type="journal article" date="2007" name="Nat. Biotechnol.">
        <title>Genome sequencing and analysis of the versatile cell factory Aspergillus niger CBS 513.88.</title>
        <authorList>
            <person name="Pel H.J."/>
            <person name="de Winde J.H."/>
            <person name="Archer D.B."/>
            <person name="Dyer P.S."/>
            <person name="Hofmann G."/>
            <person name="Schaap P.J."/>
            <person name="Turner G."/>
            <person name="de Vries R.P."/>
            <person name="Albang R."/>
            <person name="Albermann K."/>
            <person name="Andersen M.R."/>
            <person name="Bendtsen J.D."/>
            <person name="Benen J.A.E."/>
            <person name="van den Berg M."/>
            <person name="Breestraat S."/>
            <person name="Caddick M.X."/>
            <person name="Contreras R."/>
            <person name="Cornell M."/>
            <person name="Coutinho P.M."/>
            <person name="Danchin E.G.J."/>
            <person name="Debets A.J.M."/>
            <person name="Dekker P."/>
            <person name="van Dijck P.W.M."/>
            <person name="van Dijk A."/>
            <person name="Dijkhuizen L."/>
            <person name="Driessen A.J.M."/>
            <person name="d'Enfert C."/>
            <person name="Geysens S."/>
            <person name="Goosen C."/>
            <person name="Groot G.S.P."/>
            <person name="de Groot P.W.J."/>
            <person name="Guillemette T."/>
            <person name="Henrissat B."/>
            <person name="Herweijer M."/>
            <person name="van den Hombergh J.P.T.W."/>
            <person name="van den Hondel C.A.M.J.J."/>
            <person name="van der Heijden R.T.J.M."/>
            <person name="van der Kaaij R.M."/>
            <person name="Klis F.M."/>
            <person name="Kools H.J."/>
            <person name="Kubicek C.P."/>
            <person name="van Kuyk P.A."/>
            <person name="Lauber J."/>
            <person name="Lu X."/>
            <person name="van der Maarel M.J.E.C."/>
            <person name="Meulenberg R."/>
            <person name="Menke H."/>
            <person name="Mortimer M.A."/>
            <person name="Nielsen J."/>
            <person name="Oliver S.G."/>
            <person name="Olsthoorn M."/>
            <person name="Pal K."/>
            <person name="van Peij N.N.M.E."/>
            <person name="Ram A.F.J."/>
            <person name="Rinas U."/>
            <person name="Roubos J.A."/>
            <person name="Sagt C.M.J."/>
            <person name="Schmoll M."/>
            <person name="Sun J."/>
            <person name="Ussery D."/>
            <person name="Varga J."/>
            <person name="Vervecken W."/>
            <person name="van de Vondervoort P.J.J."/>
            <person name="Wedler H."/>
            <person name="Woesten H.A.B."/>
            <person name="Zeng A.-P."/>
            <person name="van Ooyen A.J.J."/>
            <person name="Visser J."/>
            <person name="Stam H."/>
        </authorList>
    </citation>
    <scope>NUCLEOTIDE SEQUENCE [LARGE SCALE GENOMIC DNA]</scope>
    <source>
        <strain>ATCC MYA-4892 / CBS 513.88 / FGSC A1513</strain>
    </source>
</reference>
<reference key="2">
    <citation type="journal article" date="2007" name="ChemBioChem">
        <title>Regio- and stereoselective intermolecular oxidative phenol coupling in kotanin biosynthesis by Aspergillus niger.</title>
        <authorList>
            <person name="Huettel W."/>
            <person name="Mueller M."/>
        </authorList>
    </citation>
    <scope>FUNCTION</scope>
</reference>
<reference key="3">
    <citation type="journal article" date="2012" name="Angew. Chem. Int. Ed.">
        <title>Regio- and stereoselective oxidative phenol coupling in Aspergillus niger.</title>
        <authorList>
            <person name="Gil Girol C."/>
            <person name="Fisch K.M."/>
            <person name="Heinekamp T."/>
            <person name="Guenther S."/>
            <person name="Huettel W."/>
            <person name="Piel J."/>
            <person name="Brakhage A.A."/>
            <person name="Mueller M."/>
        </authorList>
    </citation>
    <scope>FUNCTION</scope>
</reference>
<reference key="4">
    <citation type="journal article" date="2015" name="J. Am. Chem. Soc.">
        <title>Cytochrome P450-catalyzed regio- and stereoselective phenol coupling of fungal natural products.</title>
        <authorList>
            <person name="Mazzaferro L.S."/>
            <person name="Huettel W."/>
            <person name="Fries A."/>
            <person name="Mueller M."/>
        </authorList>
    </citation>
    <scope>FUNCTION</scope>
</reference>
<accession>A2QK64</accession>
<sequence>MTRTPAAPEKHNRDSASRYKSGSKISTLFAEELVERSAIAGFGRKDLVVFDNACGTGAISSALHRALGDEKTRTWKLTCGDVSEAMVEVSKQKMIEEGWQNAEVEVVDAQNTGLLSDHYTHVFSAFGKMLGTQGNGIMLTSISAFNLFPDDKAAMEECFRVLQSGGTLAVSTWCSTVWATLIQSAIASIPGDLPTPTTEDIFGLYNKNWADESRVRAQFQQAGFTDINVTSVKKEYTVPVQELAEACKISLPHITRKFWTQEQRDSYEAEVPKAVLRILEEEQRGIGLGAMKAEAIIATARKP</sequence>
<organism>
    <name type="scientific">Aspergillus niger (strain ATCC MYA-4892 / CBS 513.88 / FGSC A1513)</name>
    <dbReference type="NCBI Taxonomy" id="425011"/>
    <lineage>
        <taxon>Eukaryota</taxon>
        <taxon>Fungi</taxon>
        <taxon>Dikarya</taxon>
        <taxon>Ascomycota</taxon>
        <taxon>Pezizomycotina</taxon>
        <taxon>Eurotiomycetes</taxon>
        <taxon>Eurotiomycetidae</taxon>
        <taxon>Eurotiales</taxon>
        <taxon>Aspergillaceae</taxon>
        <taxon>Aspergillus</taxon>
        <taxon>Aspergillus subgen. Circumdati</taxon>
    </lineage>
</organism>
<gene>
    <name evidence="4" type="primary">ktnA</name>
    <name type="ORF">An04g09510</name>
</gene>
<feature type="chain" id="PRO_0000442166" description="Methyltransferase ktnA">
    <location>
        <begin position="1"/>
        <end position="303"/>
    </location>
</feature>